<proteinExistence type="inferred from homology"/>
<gene>
    <name type="ORF">AFUA_5G08360</name>
</gene>
<reference key="1">
    <citation type="journal article" date="2005" name="Nature">
        <title>Genomic sequence of the pathogenic and allergenic filamentous fungus Aspergillus fumigatus.</title>
        <authorList>
            <person name="Nierman W.C."/>
            <person name="Pain A."/>
            <person name="Anderson M.J."/>
            <person name="Wortman J.R."/>
            <person name="Kim H.S."/>
            <person name="Arroyo J."/>
            <person name="Berriman M."/>
            <person name="Abe K."/>
            <person name="Archer D.B."/>
            <person name="Bermejo C."/>
            <person name="Bennett J.W."/>
            <person name="Bowyer P."/>
            <person name="Chen D."/>
            <person name="Collins M."/>
            <person name="Coulsen R."/>
            <person name="Davies R."/>
            <person name="Dyer P.S."/>
            <person name="Farman M.L."/>
            <person name="Fedorova N."/>
            <person name="Fedorova N.D."/>
            <person name="Feldblyum T.V."/>
            <person name="Fischer R."/>
            <person name="Fosker N."/>
            <person name="Fraser A."/>
            <person name="Garcia J.L."/>
            <person name="Garcia M.J."/>
            <person name="Goble A."/>
            <person name="Goldman G.H."/>
            <person name="Gomi K."/>
            <person name="Griffith-Jones S."/>
            <person name="Gwilliam R."/>
            <person name="Haas B.J."/>
            <person name="Haas H."/>
            <person name="Harris D.E."/>
            <person name="Horiuchi H."/>
            <person name="Huang J."/>
            <person name="Humphray S."/>
            <person name="Jimenez J."/>
            <person name="Keller N."/>
            <person name="Khouri H."/>
            <person name="Kitamoto K."/>
            <person name="Kobayashi T."/>
            <person name="Konzack S."/>
            <person name="Kulkarni R."/>
            <person name="Kumagai T."/>
            <person name="Lafton A."/>
            <person name="Latge J.-P."/>
            <person name="Li W."/>
            <person name="Lord A."/>
            <person name="Lu C."/>
            <person name="Majoros W.H."/>
            <person name="May G.S."/>
            <person name="Miller B.L."/>
            <person name="Mohamoud Y."/>
            <person name="Molina M."/>
            <person name="Monod M."/>
            <person name="Mouyna I."/>
            <person name="Mulligan S."/>
            <person name="Murphy L.D."/>
            <person name="O'Neil S."/>
            <person name="Paulsen I."/>
            <person name="Penalva M.A."/>
            <person name="Pertea M."/>
            <person name="Price C."/>
            <person name="Pritchard B.L."/>
            <person name="Quail M.A."/>
            <person name="Rabbinowitsch E."/>
            <person name="Rawlins N."/>
            <person name="Rajandream M.A."/>
            <person name="Reichard U."/>
            <person name="Renauld H."/>
            <person name="Robson G.D."/>
            <person name="Rodriguez de Cordoba S."/>
            <person name="Rodriguez-Pena J.M."/>
            <person name="Ronning C.M."/>
            <person name="Rutter S."/>
            <person name="Salzberg S.L."/>
            <person name="Sanchez M."/>
            <person name="Sanchez-Ferrero J.C."/>
            <person name="Saunders D."/>
            <person name="Seeger K."/>
            <person name="Squares R."/>
            <person name="Squares S."/>
            <person name="Takeuchi M."/>
            <person name="Tekaia F."/>
            <person name="Turner G."/>
            <person name="Vazquez de Aldana C.R."/>
            <person name="Weidman J."/>
            <person name="White O."/>
            <person name="Woodward J.R."/>
            <person name="Yu J.-H."/>
            <person name="Fraser C.M."/>
            <person name="Galagan J.E."/>
            <person name="Asai K."/>
            <person name="Machida M."/>
            <person name="Hall N."/>
            <person name="Barrell B.G."/>
            <person name="Denning D.W."/>
        </authorList>
    </citation>
    <scope>NUCLEOTIDE SEQUENCE [LARGE SCALE GENOMIC DNA]</scope>
    <source>
        <strain>ATCC MYA-4609 / CBS 101355 / FGSC A1100 / Af293</strain>
    </source>
</reference>
<name>NNRE_ASPFU</name>
<sequence length="241" mass="26041">MSLKAISAKDAASLDKDLMEMGGWSLDQLMELAGLSVSQAGMWSIYRLHPPSAGKNVLVVCGPGNNGGDGLVAARHLAQYGYTPSVYYPKEGKNELYQRLKTQLHNLSVPFVPDFTEALKSADFLVDAIFGFSFGGPLREPFPSIISQIESSSVPVLSVDAPSSWDIQSGPPKEGPGSKFMPKALISLTAPKPCVKYYRGRHFVGGRFLTKSIVEKYGLNCPDYPGIDQIVEVGVDAEGRL</sequence>
<evidence type="ECO:0000255" key="1">
    <source>
        <dbReference type="HAMAP-Rule" id="MF_03159"/>
    </source>
</evidence>
<evidence type="ECO:0000305" key="2"/>
<protein>
    <recommendedName>
        <fullName evidence="1">NAD(P)H-hydrate epimerase</fullName>
        <ecNumber>5.1.99.6</ecNumber>
    </recommendedName>
    <alternativeName>
        <fullName evidence="1">NAD(P)HX epimerase</fullName>
    </alternativeName>
</protein>
<dbReference type="EC" id="5.1.99.6"/>
<dbReference type="EMBL" id="AAHF01000003">
    <property type="protein sequence ID" value="EAL91762.1"/>
    <property type="status" value="ALT_SEQ"/>
    <property type="molecule type" value="Genomic_DNA"/>
</dbReference>
<dbReference type="RefSeq" id="XP_753800.1">
    <property type="nucleotide sequence ID" value="XM_748707.1"/>
</dbReference>
<dbReference type="SMR" id="Q4WUG4"/>
<dbReference type="FunCoup" id="Q4WUG4">
    <property type="interactions" value="256"/>
</dbReference>
<dbReference type="STRING" id="330879.Q4WUG4"/>
<dbReference type="GeneID" id="3511280"/>
<dbReference type="KEGG" id="afm:AFUA_5G08360"/>
<dbReference type="eggNOG" id="KOG2585">
    <property type="taxonomic scope" value="Eukaryota"/>
</dbReference>
<dbReference type="HOGENOM" id="CLU_024853_3_0_1"/>
<dbReference type="InParanoid" id="Q4WUG4"/>
<dbReference type="OrthoDB" id="10064708at2759"/>
<dbReference type="Proteomes" id="UP000002530">
    <property type="component" value="Chromosome 5"/>
</dbReference>
<dbReference type="GO" id="GO:0005739">
    <property type="term" value="C:mitochondrion"/>
    <property type="evidence" value="ECO:0000318"/>
    <property type="project" value="GO_Central"/>
</dbReference>
<dbReference type="GO" id="GO:0046872">
    <property type="term" value="F:metal ion binding"/>
    <property type="evidence" value="ECO:0007669"/>
    <property type="project" value="UniProtKB-KW"/>
</dbReference>
<dbReference type="GO" id="GO:0052856">
    <property type="term" value="F:NAD(P)HX epimerase activity"/>
    <property type="evidence" value="ECO:0000318"/>
    <property type="project" value="GO_Central"/>
</dbReference>
<dbReference type="GO" id="GO:0000166">
    <property type="term" value="F:nucleotide binding"/>
    <property type="evidence" value="ECO:0007669"/>
    <property type="project" value="UniProtKB-KW"/>
</dbReference>
<dbReference type="FunFam" id="3.40.50.10260:FF:000005">
    <property type="entry name" value="NAD(P)H-hydrate epimerase"/>
    <property type="match status" value="1"/>
</dbReference>
<dbReference type="Gene3D" id="3.40.50.10260">
    <property type="entry name" value="YjeF N-terminal domain"/>
    <property type="match status" value="1"/>
</dbReference>
<dbReference type="HAMAP" id="MF_01966">
    <property type="entry name" value="NADHX_epimerase"/>
    <property type="match status" value="1"/>
</dbReference>
<dbReference type="InterPro" id="IPR004443">
    <property type="entry name" value="YjeF_N_dom"/>
</dbReference>
<dbReference type="InterPro" id="IPR036652">
    <property type="entry name" value="YjeF_N_dom_sf"/>
</dbReference>
<dbReference type="InterPro" id="IPR032976">
    <property type="entry name" value="YJEFN_prot_NAXE-like"/>
</dbReference>
<dbReference type="NCBIfam" id="TIGR00197">
    <property type="entry name" value="yjeF_nterm"/>
    <property type="match status" value="1"/>
</dbReference>
<dbReference type="PANTHER" id="PTHR13232">
    <property type="entry name" value="NAD(P)H-HYDRATE EPIMERASE"/>
    <property type="match status" value="1"/>
</dbReference>
<dbReference type="PANTHER" id="PTHR13232:SF10">
    <property type="entry name" value="NAD(P)H-HYDRATE EPIMERASE"/>
    <property type="match status" value="1"/>
</dbReference>
<dbReference type="Pfam" id="PF03853">
    <property type="entry name" value="YjeF_N"/>
    <property type="match status" value="1"/>
</dbReference>
<dbReference type="SUPFAM" id="SSF64153">
    <property type="entry name" value="YjeF N-terminal domain-like"/>
    <property type="match status" value="1"/>
</dbReference>
<dbReference type="PROSITE" id="PS51385">
    <property type="entry name" value="YJEF_N"/>
    <property type="match status" value="1"/>
</dbReference>
<accession>Q4WUG4</accession>
<feature type="chain" id="PRO_0000416335" description="NAD(P)H-hydrate epimerase">
    <location>
        <begin position="1"/>
        <end position="241"/>
    </location>
</feature>
<feature type="domain" description="YjeF N-terminal" evidence="1">
    <location>
        <begin position="11"/>
        <end position="221"/>
    </location>
</feature>
<feature type="binding site" evidence="1">
    <location>
        <begin position="65"/>
        <end position="69"/>
    </location>
    <ligand>
        <name>(6S)-NADPHX</name>
        <dbReference type="ChEBI" id="CHEBI:64076"/>
    </ligand>
</feature>
<feature type="binding site" evidence="1">
    <location>
        <position position="66"/>
    </location>
    <ligand>
        <name>K(+)</name>
        <dbReference type="ChEBI" id="CHEBI:29103"/>
    </ligand>
</feature>
<feature type="binding site" evidence="1">
    <location>
        <position position="127"/>
    </location>
    <ligand>
        <name>K(+)</name>
        <dbReference type="ChEBI" id="CHEBI:29103"/>
    </ligand>
</feature>
<feature type="binding site" evidence="1">
    <location>
        <begin position="131"/>
        <end position="137"/>
    </location>
    <ligand>
        <name>(6S)-NADPHX</name>
        <dbReference type="ChEBI" id="CHEBI:64076"/>
    </ligand>
</feature>
<feature type="binding site" evidence="1">
    <location>
        <position position="160"/>
    </location>
    <ligand>
        <name>(6S)-NADPHX</name>
        <dbReference type="ChEBI" id="CHEBI:64076"/>
    </ligand>
</feature>
<feature type="binding site" evidence="1">
    <location>
        <position position="163"/>
    </location>
    <ligand>
        <name>K(+)</name>
        <dbReference type="ChEBI" id="CHEBI:29103"/>
    </ligand>
</feature>
<keyword id="KW-0963">Cytoplasm</keyword>
<keyword id="KW-0413">Isomerase</keyword>
<keyword id="KW-0479">Metal-binding</keyword>
<keyword id="KW-0496">Mitochondrion</keyword>
<keyword id="KW-0520">NAD</keyword>
<keyword id="KW-0521">NADP</keyword>
<keyword id="KW-0547">Nucleotide-binding</keyword>
<keyword id="KW-0630">Potassium</keyword>
<keyword id="KW-1185">Reference proteome</keyword>
<comment type="function">
    <text evidence="1">Catalyzes the epimerization of the S- and R-forms of NAD(P)HX, a damaged form of NAD(P)H that is a result of enzymatic or heat-dependent hydration. This is a prerequisite for the S-specific NAD(P)H-hydrate dehydratase to allow the repair of both epimers of NAD(P)HX.</text>
</comment>
<comment type="catalytic activity">
    <reaction>
        <text>(6R)-NADHX = (6S)-NADHX</text>
        <dbReference type="Rhea" id="RHEA:32215"/>
        <dbReference type="ChEBI" id="CHEBI:64074"/>
        <dbReference type="ChEBI" id="CHEBI:64075"/>
        <dbReference type="EC" id="5.1.99.6"/>
    </reaction>
</comment>
<comment type="catalytic activity">
    <reaction>
        <text>(6R)-NADPHX = (6S)-NADPHX</text>
        <dbReference type="Rhea" id="RHEA:32227"/>
        <dbReference type="ChEBI" id="CHEBI:64076"/>
        <dbReference type="ChEBI" id="CHEBI:64077"/>
        <dbReference type="EC" id="5.1.99.6"/>
    </reaction>
</comment>
<comment type="cofactor">
    <cofactor evidence="1">
        <name>K(+)</name>
        <dbReference type="ChEBI" id="CHEBI:29103"/>
    </cofactor>
    <text evidence="1">Binds 1 potassium ion per subunit.</text>
</comment>
<comment type="subcellular location">
    <subcellularLocation>
        <location evidence="1">Cytoplasm</location>
    </subcellularLocation>
    <subcellularLocation>
        <location evidence="1">Mitochondrion</location>
    </subcellularLocation>
</comment>
<comment type="similarity">
    <text evidence="1">Belongs to the NnrE/AIBP family.</text>
</comment>
<comment type="sequence caution" evidence="2">
    <conflict type="erroneous gene model prediction">
        <sequence resource="EMBL-CDS" id="EAL91762"/>
    </conflict>
</comment>
<organism>
    <name type="scientific">Aspergillus fumigatus (strain ATCC MYA-4609 / CBS 101355 / FGSC A1100 / Af293)</name>
    <name type="common">Neosartorya fumigata</name>
    <dbReference type="NCBI Taxonomy" id="330879"/>
    <lineage>
        <taxon>Eukaryota</taxon>
        <taxon>Fungi</taxon>
        <taxon>Dikarya</taxon>
        <taxon>Ascomycota</taxon>
        <taxon>Pezizomycotina</taxon>
        <taxon>Eurotiomycetes</taxon>
        <taxon>Eurotiomycetidae</taxon>
        <taxon>Eurotiales</taxon>
        <taxon>Aspergillaceae</taxon>
        <taxon>Aspergillus</taxon>
        <taxon>Aspergillus subgen. Fumigati</taxon>
    </lineage>
</organism>